<comment type="subunit">
    <text evidence="1">Homodimer.</text>
</comment>
<comment type="similarity">
    <text evidence="1">Belongs to the UPF0210 family.</text>
</comment>
<dbReference type="EMBL" id="CP000411">
    <property type="protein sequence ID" value="ABJ56857.1"/>
    <property type="molecule type" value="Genomic_DNA"/>
</dbReference>
<dbReference type="RefSeq" id="WP_011677583.1">
    <property type="nucleotide sequence ID" value="NC_008528.1"/>
</dbReference>
<dbReference type="SMR" id="Q04FB5"/>
<dbReference type="STRING" id="203123.OEOE_0945"/>
<dbReference type="KEGG" id="ooe:OEOE_0945"/>
<dbReference type="PATRIC" id="fig|203123.7.peg.959"/>
<dbReference type="eggNOG" id="COG2848">
    <property type="taxonomic scope" value="Bacteria"/>
</dbReference>
<dbReference type="HOGENOM" id="CLU_048704_0_0_9"/>
<dbReference type="Proteomes" id="UP000000774">
    <property type="component" value="Chromosome"/>
</dbReference>
<dbReference type="CDD" id="cd08025">
    <property type="entry name" value="RNR_PFL_like_DUF711"/>
    <property type="match status" value="1"/>
</dbReference>
<dbReference type="Gene3D" id="3.20.70.20">
    <property type="match status" value="1"/>
</dbReference>
<dbReference type="HAMAP" id="MF_01221">
    <property type="entry name" value="UPF0210"/>
    <property type="match status" value="1"/>
</dbReference>
<dbReference type="InterPro" id="IPR007841">
    <property type="entry name" value="UPF0210"/>
</dbReference>
<dbReference type="NCBIfam" id="NF003700">
    <property type="entry name" value="PRK05313.1"/>
    <property type="match status" value="1"/>
</dbReference>
<dbReference type="PANTHER" id="PTHR37560:SF1">
    <property type="entry name" value="UPF0210 PROTEIN MJ1665"/>
    <property type="match status" value="1"/>
</dbReference>
<dbReference type="PANTHER" id="PTHR37560">
    <property type="entry name" value="UPF0210 PROTEIN SPR0218"/>
    <property type="match status" value="1"/>
</dbReference>
<dbReference type="Pfam" id="PF05167">
    <property type="entry name" value="DUF711"/>
    <property type="match status" value="1"/>
</dbReference>
<dbReference type="SUPFAM" id="SSF51998">
    <property type="entry name" value="PFL-like glycyl radical enzymes"/>
    <property type="match status" value="1"/>
</dbReference>
<accession>Q04FB5</accession>
<gene>
    <name type="ordered locus">OEOE_0945</name>
</gene>
<feature type="chain" id="PRO_1000066772" description="UPF0210 protein OEOE_0945">
    <location>
        <begin position="1"/>
        <end position="447"/>
    </location>
</feature>
<sequence length="447" mass="46568">MDINKINETIQMISEEHFDIRTVTMGISLLDCIGGDGQRTAEKVHRKIVDKAGKLVETAQQLERDFGVPIVNKRISVTPVSLLAGNADYDGLIKIARALDQAAADVGVDFLGGYSALIQKGSTPTEKMLIDSFPEVLSTTKLLMSSINIASTKAGINLNAVGKTGRTIKRISEVDPLGNAKLVVFANAVEDNPFMAGAFHGVSEDDAVINVGVSGPGVVKRALETVRDRSIDVVAEKIKTTAFKITRIGQLIGGLTAKKLGLPFGIVDLSLAPTPARGDSVAEVLEEIGLEQVGTHGTTAALMLLNDAIKKGGVMASQRVGGLSGAFIPVSEDAGMIDATVAGTLSISKLEAMTSVCSVGLDMIAIPGNTPASTISAMIADEAAIGVQNNKTTAVRVIPVPGKSVGDSIDFGGLLGRAPIMPVIEKSSTAFINRGGHIPAPIHSFKN</sequence>
<keyword id="KW-1185">Reference proteome</keyword>
<evidence type="ECO:0000255" key="1">
    <source>
        <dbReference type="HAMAP-Rule" id="MF_01221"/>
    </source>
</evidence>
<reference key="1">
    <citation type="journal article" date="2006" name="Proc. Natl. Acad. Sci. U.S.A.">
        <title>Comparative genomics of the lactic acid bacteria.</title>
        <authorList>
            <person name="Makarova K.S."/>
            <person name="Slesarev A."/>
            <person name="Wolf Y.I."/>
            <person name="Sorokin A."/>
            <person name="Mirkin B."/>
            <person name="Koonin E.V."/>
            <person name="Pavlov A."/>
            <person name="Pavlova N."/>
            <person name="Karamychev V."/>
            <person name="Polouchine N."/>
            <person name="Shakhova V."/>
            <person name="Grigoriev I."/>
            <person name="Lou Y."/>
            <person name="Rohksar D."/>
            <person name="Lucas S."/>
            <person name="Huang K."/>
            <person name="Goodstein D.M."/>
            <person name="Hawkins T."/>
            <person name="Plengvidhya V."/>
            <person name="Welker D."/>
            <person name="Hughes J."/>
            <person name="Goh Y."/>
            <person name="Benson A."/>
            <person name="Baldwin K."/>
            <person name="Lee J.-H."/>
            <person name="Diaz-Muniz I."/>
            <person name="Dosti B."/>
            <person name="Smeianov V."/>
            <person name="Wechter W."/>
            <person name="Barabote R."/>
            <person name="Lorca G."/>
            <person name="Altermann E."/>
            <person name="Barrangou R."/>
            <person name="Ganesan B."/>
            <person name="Xie Y."/>
            <person name="Rawsthorne H."/>
            <person name="Tamir D."/>
            <person name="Parker C."/>
            <person name="Breidt F."/>
            <person name="Broadbent J.R."/>
            <person name="Hutkins R."/>
            <person name="O'Sullivan D."/>
            <person name="Steele J."/>
            <person name="Unlu G."/>
            <person name="Saier M.H. Jr."/>
            <person name="Klaenhammer T."/>
            <person name="Richardson P."/>
            <person name="Kozyavkin S."/>
            <person name="Weimer B.C."/>
            <person name="Mills D.A."/>
        </authorList>
    </citation>
    <scope>NUCLEOTIDE SEQUENCE [LARGE SCALE GENOMIC DNA]</scope>
    <source>
        <strain>ATCC BAA-331 / PSU-1</strain>
    </source>
</reference>
<organism>
    <name type="scientific">Oenococcus oeni (strain ATCC BAA-331 / PSU-1)</name>
    <dbReference type="NCBI Taxonomy" id="203123"/>
    <lineage>
        <taxon>Bacteria</taxon>
        <taxon>Bacillati</taxon>
        <taxon>Bacillota</taxon>
        <taxon>Bacilli</taxon>
        <taxon>Lactobacillales</taxon>
        <taxon>Lactobacillaceae</taxon>
        <taxon>Oenococcus</taxon>
    </lineage>
</organism>
<proteinExistence type="inferred from homology"/>
<protein>
    <recommendedName>
        <fullName evidence="1">UPF0210 protein OEOE_0945</fullName>
    </recommendedName>
</protein>
<name>Y945_OENOB</name>